<accession>Q9C8U2</accession>
<accession>Q9LQ35</accession>
<feature type="chain" id="PRO_0000438025" description="Immune-associated nucleotide-binding protein 1">
    <location>
        <begin position="1"/>
        <end position="225"/>
    </location>
</feature>
<feature type="domain" description="AIG1-type G" evidence="2">
    <location>
        <begin position="6"/>
        <end position="214"/>
    </location>
</feature>
<feature type="region of interest" description="G1" evidence="2">
    <location>
        <begin position="15"/>
        <end position="22"/>
    </location>
</feature>
<feature type="region of interest" description="G2" evidence="2">
    <location>
        <begin position="42"/>
        <end position="46"/>
    </location>
</feature>
<feature type="region of interest" description="G3" evidence="2">
    <location>
        <begin position="64"/>
        <end position="67"/>
    </location>
</feature>
<feature type="region of interest" description="G4" evidence="2">
    <location>
        <begin position="134"/>
        <end position="137"/>
    </location>
</feature>
<feature type="region of interest" description="G5" evidence="2">
    <location>
        <begin position="173"/>
        <end position="175"/>
    </location>
</feature>
<feature type="binding site" evidence="1">
    <location>
        <begin position="15"/>
        <end position="23"/>
    </location>
    <ligand>
        <name>GTP</name>
        <dbReference type="ChEBI" id="CHEBI:37565"/>
    </ligand>
</feature>
<feature type="binding site" evidence="1">
    <location>
        <position position="174"/>
    </location>
    <ligand>
        <name>GTP</name>
        <dbReference type="ChEBI" id="CHEBI:37565"/>
    </ligand>
</feature>
<name>IAN1_ARATH</name>
<gene>
    <name evidence="3" type="primary">IAN1</name>
    <name evidence="6" type="ordered locus">At1g33830</name>
    <name evidence="7" type="ORF">T3M13.15</name>
</gene>
<reference key="1">
    <citation type="journal article" date="2000" name="Nature">
        <title>Sequence and analysis of chromosome 1 of the plant Arabidopsis thaliana.</title>
        <authorList>
            <person name="Theologis A."/>
            <person name="Ecker J.R."/>
            <person name="Palm C.J."/>
            <person name="Federspiel N.A."/>
            <person name="Kaul S."/>
            <person name="White O."/>
            <person name="Alonso J."/>
            <person name="Altafi H."/>
            <person name="Araujo R."/>
            <person name="Bowman C.L."/>
            <person name="Brooks S.Y."/>
            <person name="Buehler E."/>
            <person name="Chan A."/>
            <person name="Chao Q."/>
            <person name="Chen H."/>
            <person name="Cheuk R.F."/>
            <person name="Chin C.W."/>
            <person name="Chung M.K."/>
            <person name="Conn L."/>
            <person name="Conway A.B."/>
            <person name="Conway A.R."/>
            <person name="Creasy T.H."/>
            <person name="Dewar K."/>
            <person name="Dunn P."/>
            <person name="Etgu P."/>
            <person name="Feldblyum T.V."/>
            <person name="Feng J.-D."/>
            <person name="Fong B."/>
            <person name="Fujii C.Y."/>
            <person name="Gill J.E."/>
            <person name="Goldsmith A.D."/>
            <person name="Haas B."/>
            <person name="Hansen N.F."/>
            <person name="Hughes B."/>
            <person name="Huizar L."/>
            <person name="Hunter J.L."/>
            <person name="Jenkins J."/>
            <person name="Johnson-Hopson C."/>
            <person name="Khan S."/>
            <person name="Khaykin E."/>
            <person name="Kim C.J."/>
            <person name="Koo H.L."/>
            <person name="Kremenetskaia I."/>
            <person name="Kurtz D.B."/>
            <person name="Kwan A."/>
            <person name="Lam B."/>
            <person name="Langin-Hooper S."/>
            <person name="Lee A."/>
            <person name="Lee J.M."/>
            <person name="Lenz C.A."/>
            <person name="Li J.H."/>
            <person name="Li Y.-P."/>
            <person name="Lin X."/>
            <person name="Liu S.X."/>
            <person name="Liu Z.A."/>
            <person name="Luros J.S."/>
            <person name="Maiti R."/>
            <person name="Marziali A."/>
            <person name="Militscher J."/>
            <person name="Miranda M."/>
            <person name="Nguyen M."/>
            <person name="Nierman W.C."/>
            <person name="Osborne B.I."/>
            <person name="Pai G."/>
            <person name="Peterson J."/>
            <person name="Pham P.K."/>
            <person name="Rizzo M."/>
            <person name="Rooney T."/>
            <person name="Rowley D."/>
            <person name="Sakano H."/>
            <person name="Salzberg S.L."/>
            <person name="Schwartz J.R."/>
            <person name="Shinn P."/>
            <person name="Southwick A.M."/>
            <person name="Sun H."/>
            <person name="Tallon L.J."/>
            <person name="Tambunga G."/>
            <person name="Toriumi M.J."/>
            <person name="Town C.D."/>
            <person name="Utterback T."/>
            <person name="Van Aken S."/>
            <person name="Vaysberg M."/>
            <person name="Vysotskaia V.S."/>
            <person name="Walker M."/>
            <person name="Wu D."/>
            <person name="Yu G."/>
            <person name="Fraser C.M."/>
            <person name="Venter J.C."/>
            <person name="Davis R.W."/>
        </authorList>
    </citation>
    <scope>NUCLEOTIDE SEQUENCE [LARGE SCALE GENOMIC DNA]</scope>
    <source>
        <strain>cv. Columbia</strain>
    </source>
</reference>
<reference key="2">
    <citation type="journal article" date="2017" name="Plant J.">
        <title>Araport11: a complete reannotation of the Arabidopsis thaliana reference genome.</title>
        <authorList>
            <person name="Cheng C.Y."/>
            <person name="Krishnakumar V."/>
            <person name="Chan A.P."/>
            <person name="Thibaud-Nissen F."/>
            <person name="Schobel S."/>
            <person name="Town C.D."/>
        </authorList>
    </citation>
    <scope>GENOME REANNOTATION</scope>
    <source>
        <strain>cv. Columbia</strain>
    </source>
</reference>
<reference key="3">
    <citation type="journal article" date="2008" name="J. Plant Physiol.">
        <title>Computational identification and analysis of immune-associated nucleotide gene family in Arabidopsis thaliana.</title>
        <authorList>
            <person name="Liu C."/>
            <person name="Wang T."/>
            <person name="Zhang W."/>
            <person name="Li X."/>
        </authorList>
    </citation>
    <scope>GENE FAMILY</scope>
    <scope>NOMENCLATURE</scope>
</reference>
<protein>
    <recommendedName>
        <fullName evidence="3">Immune-associated nucleotide-binding protein 1</fullName>
        <shortName evidence="3">AtIAN1</shortName>
    </recommendedName>
    <alternativeName>
        <fullName evidence="4">AIG1-like protein</fullName>
    </alternativeName>
</protein>
<sequence>MAEQECPVTNLLLLGRSENGKSSTGNTIIGEKYFEVNLFGRDMDQRCKMFRALIEDGPIINVIDTPGLLESSVSGDYLSKEIMNCLTMAEEGIHAVLFVLSITNRISQREEFTFNTLQQIFDDKILDYFIVVFTGGDELEADNQTLDDYLREGCPEFLTRVLKLCGGRKVLFNNKTKDKGKRNKQLNQLLAHVTDIRQQNGGIPYTENMHRKIKFKNLKYSNVKL</sequence>
<proteinExistence type="inferred from homology"/>
<organism>
    <name type="scientific">Arabidopsis thaliana</name>
    <name type="common">Mouse-ear cress</name>
    <dbReference type="NCBI Taxonomy" id="3702"/>
    <lineage>
        <taxon>Eukaryota</taxon>
        <taxon>Viridiplantae</taxon>
        <taxon>Streptophyta</taxon>
        <taxon>Embryophyta</taxon>
        <taxon>Tracheophyta</taxon>
        <taxon>Spermatophyta</taxon>
        <taxon>Magnoliopsida</taxon>
        <taxon>eudicotyledons</taxon>
        <taxon>Gunneridae</taxon>
        <taxon>Pentapetalae</taxon>
        <taxon>rosids</taxon>
        <taxon>malvids</taxon>
        <taxon>Brassicales</taxon>
        <taxon>Brassicaceae</taxon>
        <taxon>Camelineae</taxon>
        <taxon>Arabidopsis</taxon>
    </lineage>
</organism>
<dbReference type="EMBL" id="AC010164">
    <property type="protein sequence ID" value="AAF97280.1"/>
    <property type="status" value="ALT_SEQ"/>
    <property type="molecule type" value="Genomic_DNA"/>
</dbReference>
<dbReference type="EMBL" id="AC022288">
    <property type="protein sequence ID" value="AAG52209.1"/>
    <property type="molecule type" value="Genomic_DNA"/>
</dbReference>
<dbReference type="EMBL" id="CP002684">
    <property type="protein sequence ID" value="AEE31630.1"/>
    <property type="molecule type" value="Genomic_DNA"/>
</dbReference>
<dbReference type="PIR" id="A86462">
    <property type="entry name" value="A86462"/>
</dbReference>
<dbReference type="RefSeq" id="NP_174645.1">
    <property type="nucleotide sequence ID" value="NM_103105.1"/>
</dbReference>
<dbReference type="SMR" id="Q9C8U2"/>
<dbReference type="FunCoup" id="Q9C8U2">
    <property type="interactions" value="30"/>
</dbReference>
<dbReference type="STRING" id="3702.Q9C8U2"/>
<dbReference type="PaxDb" id="3702-AT1G33830.1"/>
<dbReference type="EnsemblPlants" id="AT1G33830.1">
    <property type="protein sequence ID" value="AT1G33830.1"/>
    <property type="gene ID" value="AT1G33830"/>
</dbReference>
<dbReference type="GeneID" id="840278"/>
<dbReference type="Gramene" id="AT1G33830.1">
    <property type="protein sequence ID" value="AT1G33830.1"/>
    <property type="gene ID" value="AT1G33830"/>
</dbReference>
<dbReference type="KEGG" id="ath:AT1G33830"/>
<dbReference type="Araport" id="AT1G33830"/>
<dbReference type="TAIR" id="AT1G33830">
    <property type="gene designation" value="IAN1"/>
</dbReference>
<dbReference type="eggNOG" id="ENOG502R7PE">
    <property type="taxonomic scope" value="Eukaryota"/>
</dbReference>
<dbReference type="HOGENOM" id="CLU_010468_3_3_1"/>
<dbReference type="InParanoid" id="Q9C8U2"/>
<dbReference type="OMA" id="TENMHRK"/>
<dbReference type="PhylomeDB" id="Q9C8U2"/>
<dbReference type="PRO" id="PR:Q9C8U2"/>
<dbReference type="Proteomes" id="UP000006548">
    <property type="component" value="Chromosome 1"/>
</dbReference>
<dbReference type="ExpressionAtlas" id="Q9C8U2">
    <property type="expression patterns" value="differential"/>
</dbReference>
<dbReference type="GO" id="GO:0005525">
    <property type="term" value="F:GTP binding"/>
    <property type="evidence" value="ECO:0007669"/>
    <property type="project" value="UniProtKB-KW"/>
</dbReference>
<dbReference type="CDD" id="cd01852">
    <property type="entry name" value="AIG1"/>
    <property type="match status" value="1"/>
</dbReference>
<dbReference type="FunFam" id="3.40.50.300:FF:000840">
    <property type="entry name" value="Immune-associated nucleotide-binding protein 9"/>
    <property type="match status" value="1"/>
</dbReference>
<dbReference type="Gene3D" id="3.40.50.300">
    <property type="entry name" value="P-loop containing nucleotide triphosphate hydrolases"/>
    <property type="match status" value="1"/>
</dbReference>
<dbReference type="InterPro" id="IPR006703">
    <property type="entry name" value="G_AIG1"/>
</dbReference>
<dbReference type="InterPro" id="IPR045058">
    <property type="entry name" value="GIMA/IAN/Toc"/>
</dbReference>
<dbReference type="InterPro" id="IPR027417">
    <property type="entry name" value="P-loop_NTPase"/>
</dbReference>
<dbReference type="PANTHER" id="PTHR10903:SF146">
    <property type="entry name" value="AIG1-LIKE PROTEIN_ 48352-49494-RELATED"/>
    <property type="match status" value="1"/>
</dbReference>
<dbReference type="PANTHER" id="PTHR10903">
    <property type="entry name" value="GTPASE, IMAP FAMILY MEMBER-RELATED"/>
    <property type="match status" value="1"/>
</dbReference>
<dbReference type="Pfam" id="PF04548">
    <property type="entry name" value="AIG1"/>
    <property type="match status" value="1"/>
</dbReference>
<dbReference type="SUPFAM" id="SSF52540">
    <property type="entry name" value="P-loop containing nucleoside triphosphate hydrolases"/>
    <property type="match status" value="1"/>
</dbReference>
<dbReference type="PROSITE" id="PS51720">
    <property type="entry name" value="G_AIG1"/>
    <property type="match status" value="1"/>
</dbReference>
<comment type="tissue specificity">
    <text evidence="5">Mostly expressed in pollen.</text>
</comment>
<comment type="developmental stage">
    <text evidence="5">Expressed at the early flowering stage and at the late stage of silique development.</text>
</comment>
<comment type="induction">
    <text evidence="5">Up-regulated by brassinolides. Down-regulated by 2-aminoethoxyvinylglycine (AVG), high CO(2), isoxaben, and propiconazole treatments.</text>
</comment>
<comment type="similarity">
    <text evidence="4">Belongs to the TRAFAC class TrmE-Era-EngA-EngB-Septin-like GTPase superfamily. AIG1/Toc34/Toc159-like paraseptin GTPase family. IAN subfamily.</text>
</comment>
<comment type="sequence caution" evidence="4">
    <conflict type="erroneous gene model prediction">
        <sequence resource="EMBL-CDS" id="AAF97280"/>
    </conflict>
</comment>
<evidence type="ECO:0000250" key="1">
    <source>
        <dbReference type="UniProtKB" id="Q8NHV1"/>
    </source>
</evidence>
<evidence type="ECO:0000255" key="2">
    <source>
        <dbReference type="PROSITE-ProRule" id="PRU01057"/>
    </source>
</evidence>
<evidence type="ECO:0000303" key="3">
    <source>
    </source>
</evidence>
<evidence type="ECO:0000305" key="4"/>
<evidence type="ECO:0000305" key="5">
    <source>
    </source>
</evidence>
<evidence type="ECO:0000312" key="6">
    <source>
        <dbReference type="Araport" id="AT1G33830"/>
    </source>
</evidence>
<evidence type="ECO:0000312" key="7">
    <source>
        <dbReference type="EMBL" id="AAG52209.1"/>
    </source>
</evidence>
<keyword id="KW-0342">GTP-binding</keyword>
<keyword id="KW-0547">Nucleotide-binding</keyword>
<keyword id="KW-1185">Reference proteome</keyword>